<protein>
    <recommendedName>
        <fullName evidence="1">Exodeoxyribonuclease 7 large subunit</fullName>
        <ecNumber evidence="1">3.1.11.6</ecNumber>
    </recommendedName>
    <alternativeName>
        <fullName evidence="1">Exodeoxyribonuclease VII large subunit</fullName>
        <shortName evidence="1">Exonuclease VII large subunit</shortName>
    </alternativeName>
</protein>
<feature type="chain" id="PRO_1000079982" description="Exodeoxyribonuclease 7 large subunit">
    <location>
        <begin position="1"/>
        <end position="401"/>
    </location>
</feature>
<keyword id="KW-0963">Cytoplasm</keyword>
<keyword id="KW-0269">Exonuclease</keyword>
<keyword id="KW-0378">Hydrolase</keyword>
<keyword id="KW-0540">Nuclease</keyword>
<keyword id="KW-1185">Reference proteome</keyword>
<organism>
    <name type="scientific">Lachnoclostridium phytofermentans (strain ATCC 700394 / DSM 18823 / ISDg)</name>
    <name type="common">Clostridium phytofermentans</name>
    <dbReference type="NCBI Taxonomy" id="357809"/>
    <lineage>
        <taxon>Bacteria</taxon>
        <taxon>Bacillati</taxon>
        <taxon>Bacillota</taxon>
        <taxon>Clostridia</taxon>
        <taxon>Lachnospirales</taxon>
        <taxon>Lachnospiraceae</taxon>
    </lineage>
</organism>
<gene>
    <name evidence="1" type="primary">xseA</name>
    <name type="ordered locus">Cphy_2514</name>
</gene>
<sequence length="401" mass="44927">MEQVYSVTQVNNYIKNMFVKDYVLNRIYMKGEVSNCKYHTSGHIYFTLKDETGQMACVLFAGYRTGLPFRLEEGQSVIVLGSISVYERDGKYQLYAKEIKLDGLGLLYERFELLKRKLNEEGLFDPSHKKTLVPYPRTVGIVTASTGAAIQDIINISKRRNPYVQLVLYPAKVQGEGAAKTIVAGIKALEAKGVDTIIVGRGGGSIEDLWAFNEEMVARAIFDCSIPIISAVGHETDITISDFVSDLRAPTPSAAAELAVPEIESLLSNLVDYHYSLVQCVMRKITMARSELEKKQLQLTHLSPVYALRQKRQYTIDLENKLRQRMNELIRYKRHLLDIQIERLKAASPLDKLKSGFSYVSDSSGKVVNSITKTKPGDELTIAVTDGMIKAKTIGVESIER</sequence>
<evidence type="ECO:0000255" key="1">
    <source>
        <dbReference type="HAMAP-Rule" id="MF_00378"/>
    </source>
</evidence>
<name>EX7L_LACP7</name>
<dbReference type="EC" id="3.1.11.6" evidence="1"/>
<dbReference type="EMBL" id="CP000885">
    <property type="protein sequence ID" value="ABX42875.1"/>
    <property type="molecule type" value="Genomic_DNA"/>
</dbReference>
<dbReference type="RefSeq" id="WP_012200528.1">
    <property type="nucleotide sequence ID" value="NC_010001.1"/>
</dbReference>
<dbReference type="SMR" id="A9KMC1"/>
<dbReference type="STRING" id="357809.Cphy_2514"/>
<dbReference type="KEGG" id="cpy:Cphy_2514"/>
<dbReference type="eggNOG" id="COG1570">
    <property type="taxonomic scope" value="Bacteria"/>
</dbReference>
<dbReference type="HOGENOM" id="CLU_023625_2_0_9"/>
<dbReference type="OrthoDB" id="9802795at2"/>
<dbReference type="Proteomes" id="UP000000370">
    <property type="component" value="Chromosome"/>
</dbReference>
<dbReference type="GO" id="GO:0005737">
    <property type="term" value="C:cytoplasm"/>
    <property type="evidence" value="ECO:0007669"/>
    <property type="project" value="UniProtKB-SubCell"/>
</dbReference>
<dbReference type="GO" id="GO:0009318">
    <property type="term" value="C:exodeoxyribonuclease VII complex"/>
    <property type="evidence" value="ECO:0007669"/>
    <property type="project" value="InterPro"/>
</dbReference>
<dbReference type="GO" id="GO:0008855">
    <property type="term" value="F:exodeoxyribonuclease VII activity"/>
    <property type="evidence" value="ECO:0007669"/>
    <property type="project" value="UniProtKB-UniRule"/>
</dbReference>
<dbReference type="GO" id="GO:0003676">
    <property type="term" value="F:nucleic acid binding"/>
    <property type="evidence" value="ECO:0007669"/>
    <property type="project" value="InterPro"/>
</dbReference>
<dbReference type="GO" id="GO:0006308">
    <property type="term" value="P:DNA catabolic process"/>
    <property type="evidence" value="ECO:0007669"/>
    <property type="project" value="UniProtKB-UniRule"/>
</dbReference>
<dbReference type="CDD" id="cd04489">
    <property type="entry name" value="ExoVII_LU_OBF"/>
    <property type="match status" value="1"/>
</dbReference>
<dbReference type="Gene3D" id="2.40.50.1010">
    <property type="match status" value="1"/>
</dbReference>
<dbReference type="HAMAP" id="MF_00378">
    <property type="entry name" value="Exonuc_7_L"/>
    <property type="match status" value="1"/>
</dbReference>
<dbReference type="InterPro" id="IPR003753">
    <property type="entry name" value="Exonuc_VII_L"/>
</dbReference>
<dbReference type="InterPro" id="IPR020579">
    <property type="entry name" value="Exonuc_VII_lsu_C"/>
</dbReference>
<dbReference type="InterPro" id="IPR025824">
    <property type="entry name" value="OB-fold_nuc-bd_dom"/>
</dbReference>
<dbReference type="NCBIfam" id="TIGR00237">
    <property type="entry name" value="xseA"/>
    <property type="match status" value="1"/>
</dbReference>
<dbReference type="PANTHER" id="PTHR30008">
    <property type="entry name" value="EXODEOXYRIBONUCLEASE 7 LARGE SUBUNIT"/>
    <property type="match status" value="1"/>
</dbReference>
<dbReference type="PANTHER" id="PTHR30008:SF0">
    <property type="entry name" value="EXODEOXYRIBONUCLEASE 7 LARGE SUBUNIT"/>
    <property type="match status" value="1"/>
</dbReference>
<dbReference type="Pfam" id="PF02601">
    <property type="entry name" value="Exonuc_VII_L"/>
    <property type="match status" value="2"/>
</dbReference>
<dbReference type="Pfam" id="PF13742">
    <property type="entry name" value="tRNA_anti_2"/>
    <property type="match status" value="1"/>
</dbReference>
<proteinExistence type="inferred from homology"/>
<accession>A9KMC1</accession>
<reference key="1">
    <citation type="submission" date="2007-11" db="EMBL/GenBank/DDBJ databases">
        <title>Complete genome sequence of Clostridium phytofermentans ISDg.</title>
        <authorList>
            <person name="Leschine S.B."/>
            <person name="Warnick T.A."/>
            <person name="Blanchard J.L."/>
            <person name="Schnell D.J."/>
            <person name="Petit E.L."/>
            <person name="LaTouf W.G."/>
            <person name="Copeland A."/>
            <person name="Lucas S."/>
            <person name="Lapidus A."/>
            <person name="Barry K."/>
            <person name="Glavina del Rio T."/>
            <person name="Dalin E."/>
            <person name="Tice H."/>
            <person name="Pitluck S."/>
            <person name="Kiss H."/>
            <person name="Brettin T."/>
            <person name="Bruce D."/>
            <person name="Detter J.C."/>
            <person name="Han C."/>
            <person name="Kuske C."/>
            <person name="Schmutz J."/>
            <person name="Larimer F."/>
            <person name="Land M."/>
            <person name="Hauser L."/>
            <person name="Kyrpides N."/>
            <person name="Kim E.A."/>
            <person name="Richardson P."/>
        </authorList>
    </citation>
    <scope>NUCLEOTIDE SEQUENCE [LARGE SCALE GENOMIC DNA]</scope>
    <source>
        <strain>ATCC 700394 / DSM 18823 / ISDg</strain>
    </source>
</reference>
<comment type="function">
    <text evidence="1">Bidirectionally degrades single-stranded DNA into large acid-insoluble oligonucleotides, which are then degraded further into small acid-soluble oligonucleotides.</text>
</comment>
<comment type="catalytic activity">
    <reaction evidence="1">
        <text>Exonucleolytic cleavage in either 5'- to 3'- or 3'- to 5'-direction to yield nucleoside 5'-phosphates.</text>
        <dbReference type="EC" id="3.1.11.6"/>
    </reaction>
</comment>
<comment type="subunit">
    <text evidence="1">Heterooligomer composed of large and small subunits.</text>
</comment>
<comment type="subcellular location">
    <subcellularLocation>
        <location evidence="1">Cytoplasm</location>
    </subcellularLocation>
</comment>
<comment type="similarity">
    <text evidence="1">Belongs to the XseA family.</text>
</comment>